<gene>
    <name evidence="1" type="primary">nfuA</name>
    <name type="ordered locus">KPN78578_37470</name>
    <name type="ORF">KPN_03784</name>
</gene>
<organism>
    <name type="scientific">Klebsiella pneumoniae subsp. pneumoniae (strain ATCC 700721 / MGH 78578)</name>
    <dbReference type="NCBI Taxonomy" id="272620"/>
    <lineage>
        <taxon>Bacteria</taxon>
        <taxon>Pseudomonadati</taxon>
        <taxon>Pseudomonadota</taxon>
        <taxon>Gammaproteobacteria</taxon>
        <taxon>Enterobacterales</taxon>
        <taxon>Enterobacteriaceae</taxon>
        <taxon>Klebsiella/Raoultella group</taxon>
        <taxon>Klebsiella</taxon>
        <taxon>Klebsiella pneumoniae complex</taxon>
    </lineage>
</organism>
<feature type="chain" id="PRO_1000069873" description="Fe/S biogenesis protein NfuA">
    <location>
        <begin position="1"/>
        <end position="191"/>
    </location>
</feature>
<feature type="binding site" evidence="1">
    <location>
        <position position="149"/>
    </location>
    <ligand>
        <name>[4Fe-4S] cluster</name>
        <dbReference type="ChEBI" id="CHEBI:49883"/>
    </ligand>
</feature>
<feature type="binding site" evidence="1">
    <location>
        <position position="152"/>
    </location>
    <ligand>
        <name>[4Fe-4S] cluster</name>
        <dbReference type="ChEBI" id="CHEBI:49883"/>
    </ligand>
</feature>
<dbReference type="EMBL" id="CP000647">
    <property type="protein sequence ID" value="ABR79171.1"/>
    <property type="molecule type" value="Genomic_DNA"/>
</dbReference>
<dbReference type="RefSeq" id="WP_002920540.1">
    <property type="nucleotide sequence ID" value="NC_009648.1"/>
</dbReference>
<dbReference type="SMR" id="A6TF37"/>
<dbReference type="STRING" id="272620.KPN_03784"/>
<dbReference type="PaxDb" id="272620-KPN_03784"/>
<dbReference type="EnsemblBacteria" id="ABR79171">
    <property type="protein sequence ID" value="ABR79171"/>
    <property type="gene ID" value="KPN_03784"/>
</dbReference>
<dbReference type="GeneID" id="93270904"/>
<dbReference type="KEGG" id="kpn:KPN_03784"/>
<dbReference type="HOGENOM" id="CLU_094569_0_0_6"/>
<dbReference type="Proteomes" id="UP000000265">
    <property type="component" value="Chromosome"/>
</dbReference>
<dbReference type="GO" id="GO:0051539">
    <property type="term" value="F:4 iron, 4 sulfur cluster binding"/>
    <property type="evidence" value="ECO:0007669"/>
    <property type="project" value="UniProtKB-UniRule"/>
</dbReference>
<dbReference type="GO" id="GO:0005506">
    <property type="term" value="F:iron ion binding"/>
    <property type="evidence" value="ECO:0007669"/>
    <property type="project" value="InterPro"/>
</dbReference>
<dbReference type="GO" id="GO:0016226">
    <property type="term" value="P:iron-sulfur cluster assembly"/>
    <property type="evidence" value="ECO:0007669"/>
    <property type="project" value="UniProtKB-UniRule"/>
</dbReference>
<dbReference type="GO" id="GO:0051604">
    <property type="term" value="P:protein maturation"/>
    <property type="evidence" value="ECO:0007669"/>
    <property type="project" value="UniProtKB-UniRule"/>
</dbReference>
<dbReference type="FunFam" id="2.60.300.12:FF:000004">
    <property type="entry name" value="Fe/S biogenesis protein NfuA"/>
    <property type="match status" value="1"/>
</dbReference>
<dbReference type="FunFam" id="3.30.300.130:FF:000002">
    <property type="entry name" value="Fe/S biogenesis protein NfuA"/>
    <property type="match status" value="1"/>
</dbReference>
<dbReference type="Gene3D" id="3.30.300.130">
    <property type="entry name" value="Fe-S cluster assembly (FSCA)"/>
    <property type="match status" value="1"/>
</dbReference>
<dbReference type="Gene3D" id="2.60.300.12">
    <property type="entry name" value="HesB-like domain"/>
    <property type="match status" value="1"/>
</dbReference>
<dbReference type="HAMAP" id="MF_01637">
    <property type="entry name" value="Fe_S_biogen_NfuA"/>
    <property type="match status" value="1"/>
</dbReference>
<dbReference type="InterPro" id="IPR017726">
    <property type="entry name" value="Fe/S_biogenesis_protein_NfuA"/>
</dbReference>
<dbReference type="InterPro" id="IPR000361">
    <property type="entry name" value="FeS_biogenesis"/>
</dbReference>
<dbReference type="InterPro" id="IPR034904">
    <property type="entry name" value="FSCA_dom_sf"/>
</dbReference>
<dbReference type="InterPro" id="IPR035903">
    <property type="entry name" value="HesB-like_dom_sf"/>
</dbReference>
<dbReference type="InterPro" id="IPR001075">
    <property type="entry name" value="NIF_FeS_clus_asmbl_NifU_C"/>
</dbReference>
<dbReference type="NCBIfam" id="NF008392">
    <property type="entry name" value="PRK11190.1"/>
    <property type="match status" value="1"/>
</dbReference>
<dbReference type="NCBIfam" id="TIGR03341">
    <property type="entry name" value="YhgI_GntY"/>
    <property type="match status" value="1"/>
</dbReference>
<dbReference type="PANTHER" id="PTHR11178:SF51">
    <property type="entry name" value="FE_S BIOGENESIS PROTEIN NFUA"/>
    <property type="match status" value="1"/>
</dbReference>
<dbReference type="PANTHER" id="PTHR11178">
    <property type="entry name" value="IRON-SULFUR CLUSTER SCAFFOLD PROTEIN NFU-RELATED"/>
    <property type="match status" value="1"/>
</dbReference>
<dbReference type="Pfam" id="PF01521">
    <property type="entry name" value="Fe-S_biosyn"/>
    <property type="match status" value="1"/>
</dbReference>
<dbReference type="Pfam" id="PF01106">
    <property type="entry name" value="NifU"/>
    <property type="match status" value="1"/>
</dbReference>
<dbReference type="SUPFAM" id="SSF117916">
    <property type="entry name" value="Fe-S cluster assembly (FSCA) domain-like"/>
    <property type="match status" value="1"/>
</dbReference>
<dbReference type="SUPFAM" id="SSF89360">
    <property type="entry name" value="HesB-like domain"/>
    <property type="match status" value="1"/>
</dbReference>
<sequence>MIRISDAAQAHFAKLLANQEEGTQIRVFVINPGTPNAECGVSYCPPDAVEDTDTALKFEQLTAYVDELSAPYLEDAEIDFVTDQLGSQLTLKAPNAKMRKVSDDAPLMERVEYLLQSQINPQLAGHGGRVSLMEITDDGLAILQFGGGCNGCSMVDVTLKEGIEKQLLNEFPELKGVRDLTEHQRGEHSYY</sequence>
<proteinExistence type="inferred from homology"/>
<protein>
    <recommendedName>
        <fullName evidence="1">Fe/S biogenesis protein NfuA</fullName>
    </recommendedName>
</protein>
<evidence type="ECO:0000255" key="1">
    <source>
        <dbReference type="HAMAP-Rule" id="MF_01637"/>
    </source>
</evidence>
<accession>A6TF37</accession>
<reference key="1">
    <citation type="submission" date="2006-09" db="EMBL/GenBank/DDBJ databases">
        <authorList>
            <consortium name="The Klebsiella pneumonia Genome Sequencing Project"/>
            <person name="McClelland M."/>
            <person name="Sanderson E.K."/>
            <person name="Spieth J."/>
            <person name="Clifton W.S."/>
            <person name="Latreille P."/>
            <person name="Sabo A."/>
            <person name="Pepin K."/>
            <person name="Bhonagiri V."/>
            <person name="Porwollik S."/>
            <person name="Ali J."/>
            <person name="Wilson R.K."/>
        </authorList>
    </citation>
    <scope>NUCLEOTIDE SEQUENCE [LARGE SCALE GENOMIC DNA]</scope>
    <source>
        <strain>ATCC 700721 / MGH 78578</strain>
    </source>
</reference>
<name>NFUA_KLEP7</name>
<comment type="function">
    <text evidence="1">Involved in iron-sulfur cluster biogenesis. Binds a 4Fe-4S cluster, can transfer this cluster to apoproteins, and thereby intervenes in the maturation of Fe/S proteins. Could also act as a scaffold/chaperone for damaged Fe/S proteins.</text>
</comment>
<comment type="cofactor">
    <cofactor evidence="1">
        <name>[4Fe-4S] cluster</name>
        <dbReference type="ChEBI" id="CHEBI:49883"/>
    </cofactor>
    <text evidence="1">Binds 1 [4Fe-4S] cluster per subunit. The cluster is presumably bound at the interface of two monomers.</text>
</comment>
<comment type="subunit">
    <text evidence="1">Homodimer.</text>
</comment>
<comment type="similarity">
    <text evidence="1">Belongs to the NfuA family.</text>
</comment>
<keyword id="KW-0004">4Fe-4S</keyword>
<keyword id="KW-0408">Iron</keyword>
<keyword id="KW-0411">Iron-sulfur</keyword>
<keyword id="KW-0479">Metal-binding</keyword>